<reference key="1">
    <citation type="journal article" date="2004" name="Nucleic Acids Res.">
        <title>Comparative analysis of the Borrelia garinii genome.</title>
        <authorList>
            <person name="Gloeckner G."/>
            <person name="Lehmann R."/>
            <person name="Romualdi A."/>
            <person name="Pradella S."/>
            <person name="Schulte-Spechtel U."/>
            <person name="Schilhabel M."/>
            <person name="Wilske B."/>
            <person name="Suehnel J."/>
            <person name="Platzer M."/>
        </authorList>
    </citation>
    <scope>NUCLEOTIDE SEQUENCE [LARGE SCALE GENOMIC DNA]</scope>
    <source>
        <strain>ATCC BAA-2496 / DSM 23469 / PBi</strain>
    </source>
</reference>
<accession>Q662H4</accession>
<sequence length="186" mass="21678">MINRNANRDRDRSRSNDKELKINYRIKAREVRVIFENGIQEVLSIEDAIKKAKEAGLDLVEVSPNVSPPVCKIIDYGKYKFHQEKRQKEQKKNQKVIKLKEVRMQPKIDTHDLDFKSKNILSFLKDGNKVKVTIRFRGRELAHTYLGYDILNSILEKVGEVNYVLESAAKMEGKTMFLIVAPKFKK</sequence>
<evidence type="ECO:0000255" key="1">
    <source>
        <dbReference type="HAMAP-Rule" id="MF_00080"/>
    </source>
</evidence>
<dbReference type="EMBL" id="CP000013">
    <property type="protein sequence ID" value="AAU07047.1"/>
    <property type="molecule type" value="Genomic_DNA"/>
</dbReference>
<dbReference type="RefSeq" id="WP_011193535.1">
    <property type="nucleotide sequence ID" value="NZ_CP028872.1"/>
</dbReference>
<dbReference type="SMR" id="Q662H4"/>
<dbReference type="GeneID" id="45160982"/>
<dbReference type="KEGG" id="bga:BG0189"/>
<dbReference type="eggNOG" id="COG0290">
    <property type="taxonomic scope" value="Bacteria"/>
</dbReference>
<dbReference type="HOGENOM" id="CLU_054919_3_2_12"/>
<dbReference type="OrthoDB" id="9806014at2"/>
<dbReference type="Proteomes" id="UP000002276">
    <property type="component" value="Chromosome"/>
</dbReference>
<dbReference type="GO" id="GO:0005829">
    <property type="term" value="C:cytosol"/>
    <property type="evidence" value="ECO:0007669"/>
    <property type="project" value="TreeGrafter"/>
</dbReference>
<dbReference type="GO" id="GO:0016020">
    <property type="term" value="C:membrane"/>
    <property type="evidence" value="ECO:0007669"/>
    <property type="project" value="TreeGrafter"/>
</dbReference>
<dbReference type="GO" id="GO:0043022">
    <property type="term" value="F:ribosome binding"/>
    <property type="evidence" value="ECO:0007669"/>
    <property type="project" value="TreeGrafter"/>
</dbReference>
<dbReference type="GO" id="GO:0003743">
    <property type="term" value="F:translation initiation factor activity"/>
    <property type="evidence" value="ECO:0007669"/>
    <property type="project" value="UniProtKB-UniRule"/>
</dbReference>
<dbReference type="GO" id="GO:0032790">
    <property type="term" value="P:ribosome disassembly"/>
    <property type="evidence" value="ECO:0007669"/>
    <property type="project" value="TreeGrafter"/>
</dbReference>
<dbReference type="FunFam" id="3.30.110.10:FF:000001">
    <property type="entry name" value="Translation initiation factor IF-3"/>
    <property type="match status" value="1"/>
</dbReference>
<dbReference type="Gene3D" id="3.30.110.10">
    <property type="entry name" value="Translation initiation factor 3 (IF-3), C-terminal domain"/>
    <property type="match status" value="1"/>
</dbReference>
<dbReference type="Gene3D" id="3.10.20.80">
    <property type="entry name" value="Translation initiation factor 3 (IF-3), N-terminal domain"/>
    <property type="match status" value="1"/>
</dbReference>
<dbReference type="HAMAP" id="MF_00080">
    <property type="entry name" value="IF_3"/>
    <property type="match status" value="1"/>
</dbReference>
<dbReference type="InterPro" id="IPR036788">
    <property type="entry name" value="T_IF-3_C_sf"/>
</dbReference>
<dbReference type="InterPro" id="IPR036787">
    <property type="entry name" value="T_IF-3_N_sf"/>
</dbReference>
<dbReference type="InterPro" id="IPR019813">
    <property type="entry name" value="Translation_initiation_fac3_CS"/>
</dbReference>
<dbReference type="InterPro" id="IPR001288">
    <property type="entry name" value="Translation_initiation_fac_3"/>
</dbReference>
<dbReference type="InterPro" id="IPR019815">
    <property type="entry name" value="Translation_initiation_fac_3_C"/>
</dbReference>
<dbReference type="InterPro" id="IPR019814">
    <property type="entry name" value="Translation_initiation_fac_3_N"/>
</dbReference>
<dbReference type="NCBIfam" id="TIGR00168">
    <property type="entry name" value="infC"/>
    <property type="match status" value="1"/>
</dbReference>
<dbReference type="PANTHER" id="PTHR10938">
    <property type="entry name" value="TRANSLATION INITIATION FACTOR IF-3"/>
    <property type="match status" value="1"/>
</dbReference>
<dbReference type="PANTHER" id="PTHR10938:SF0">
    <property type="entry name" value="TRANSLATION INITIATION FACTOR IF-3, MITOCHONDRIAL"/>
    <property type="match status" value="1"/>
</dbReference>
<dbReference type="Pfam" id="PF00707">
    <property type="entry name" value="IF3_C"/>
    <property type="match status" value="1"/>
</dbReference>
<dbReference type="Pfam" id="PF05198">
    <property type="entry name" value="IF3_N"/>
    <property type="match status" value="1"/>
</dbReference>
<dbReference type="SUPFAM" id="SSF55200">
    <property type="entry name" value="Translation initiation factor IF3, C-terminal domain"/>
    <property type="match status" value="1"/>
</dbReference>
<dbReference type="SUPFAM" id="SSF54364">
    <property type="entry name" value="Translation initiation factor IF3, N-terminal domain"/>
    <property type="match status" value="1"/>
</dbReference>
<dbReference type="PROSITE" id="PS00938">
    <property type="entry name" value="IF3"/>
    <property type="match status" value="1"/>
</dbReference>
<protein>
    <recommendedName>
        <fullName evidence="1">Translation initiation factor IF-3</fullName>
    </recommendedName>
</protein>
<name>IF3_BORGP</name>
<gene>
    <name evidence="1" type="primary">infC</name>
    <name type="ordered locus">BG0189</name>
</gene>
<proteinExistence type="inferred from homology"/>
<comment type="function">
    <text evidence="1">IF-3 binds to the 30S ribosomal subunit and shifts the equilibrium between 70S ribosomes and their 50S and 30S subunits in favor of the free subunits, thus enhancing the availability of 30S subunits on which protein synthesis initiation begins.</text>
</comment>
<comment type="subunit">
    <text evidence="1">Monomer.</text>
</comment>
<comment type="subcellular location">
    <subcellularLocation>
        <location evidence="1">Cytoplasm</location>
    </subcellularLocation>
</comment>
<comment type="similarity">
    <text evidence="1">Belongs to the IF-3 family.</text>
</comment>
<keyword id="KW-0963">Cytoplasm</keyword>
<keyword id="KW-0396">Initiation factor</keyword>
<keyword id="KW-0648">Protein biosynthesis</keyword>
<organism>
    <name type="scientific">Borrelia garinii subsp. bavariensis (strain ATCC BAA-2496 / DSM 23469 / PBi)</name>
    <name type="common">Borreliella bavariensis</name>
    <dbReference type="NCBI Taxonomy" id="290434"/>
    <lineage>
        <taxon>Bacteria</taxon>
        <taxon>Pseudomonadati</taxon>
        <taxon>Spirochaetota</taxon>
        <taxon>Spirochaetia</taxon>
        <taxon>Spirochaetales</taxon>
        <taxon>Borreliaceae</taxon>
        <taxon>Borreliella</taxon>
    </lineage>
</organism>
<feature type="chain" id="PRO_0000177488" description="Translation initiation factor IF-3">
    <location>
        <begin position="1"/>
        <end position="186"/>
    </location>
</feature>